<accession>P08722</accession>
<accession>Q2M840</accession>
<proteinExistence type="evidence at protein level"/>
<sequence length="625" mass="66483">MTELARKIVAGVGGADNIVSLMHCATRLRFKLKDESKAQAEVLKKTPGIIMVVESGGQFQVVIGNHVADVFLAVNSVAGLDEKAQQAPENDDKGNLLNRFVYVISGIFTPLIGLMAATGILKGMLALALTFQWTTEQSGTYLILFSASDALFWFFPIILGYTAGKRFGGNPFTAMVIGGALVHPLILTAFENGQKADALGLDFLGIPVTLLNYSSSVIPIIFSAWLCSILERRLNAWLPSAIKNFFTPLLCLMVITPVTFLLVGPLSTWISELIAAGYLWLYQAVPAFAGAVMGGFWQIFVMFGLHWGLVPLCINNFTVLGYDTMIPLLMPAIMAQVGAALGVFLCERDAQKKVVAGSAALTSLFGITEPAVYGVNLPRKYPFVIACISGALGATIIGYAQTKVYSFGLPSIFTFMQTIPSTGIDFTVWASVIGGVIAIGCAFVGTVMLHFITAKRQPAQGAPQEKTPEVITPPEQGGICSPMTGEIVPLIHVADTTFASGLLGKGIAILPSVGEVRSPVAGRIASLFATLHAIGIESDDGVEILIHVGIDTVKLDGKFFSAHVNVGDKVNTGDRLISFDIPAIREAGFDLTTPVLISNSDDFTDVLPHGTAQISAGEPLLSIIR</sequence>
<keyword id="KW-0997">Cell inner membrane</keyword>
<keyword id="KW-1003">Cell membrane</keyword>
<keyword id="KW-0418">Kinase</keyword>
<keyword id="KW-0472">Membrane</keyword>
<keyword id="KW-0598">Phosphotransferase system</keyword>
<keyword id="KW-1185">Reference proteome</keyword>
<keyword id="KW-0762">Sugar transport</keyword>
<keyword id="KW-0808">Transferase</keyword>
<keyword id="KW-0812">Transmembrane</keyword>
<keyword id="KW-1133">Transmembrane helix</keyword>
<keyword id="KW-0813">Transport</keyword>
<comment type="function">
    <text>The phosphoenolpyruvate-dependent sugar phosphotransferase system (sugar PTS), a major carbohydrate active -transport system, catalyzes the phosphorylation of incoming sugar substrates concomitantly with their translocation across the cell membrane. This system is involved in beta-glucoside transport.</text>
</comment>
<comment type="function">
    <text>Acts both as a kinase and as a phosphatase on BglG.</text>
</comment>
<comment type="subcellular location">
    <subcellularLocation>
        <location>Cell inner membrane</location>
        <topology>Multi-pass membrane protein</topology>
    </subcellularLocation>
</comment>
<comment type="domain">
    <text>The EIIB domain is phosphorylated by phospho-EIIA on a cysteinyl or histidyl residue, depending on the transported sugar. Then, it transfers the phosphoryl group to the sugar substrate concomitantly with the sugar uptake processed by the EIIC domain.</text>
</comment>
<comment type="domain">
    <text>The EIIC domain forms the PTS system translocation channel and contains the specific substrate-binding site.</text>
</comment>
<comment type="domain">
    <text>The EIIA domain is phosphorylated by phospho-HPr on a histidyl residue. Then, it transfers the phosphoryl group to the EIIB domain.</text>
</comment>
<reference key="1">
    <citation type="journal article" date="1987" name="J. Gen. Microbiol.">
        <title>Nucleotide sequence of bglC, the gene specifying enzymeIIbgl of the PEP:sugar phosphotransferase system in Escherichia coli K12, and overexpression of the gene product.</title>
        <authorList>
            <person name="Bramley H.F."/>
            <person name="Kornberg H.L."/>
        </authorList>
    </citation>
    <scope>NUCLEOTIDE SEQUENCE [GENOMIC DNA]</scope>
    <source>
        <strain>K12</strain>
    </source>
</reference>
<reference key="2">
    <citation type="journal article" date="1987" name="J. Bacteriol.">
        <title>Beta-glucoside (bgl) operon of Escherichia coli K-12: nucleotide sequence, genetic organization, and possible evolutionary relationship to regulatory components of two Bacillus subtilis genes.</title>
        <authorList>
            <person name="Schnetz K."/>
            <person name="Toloczyki C."/>
            <person name="Rak B."/>
        </authorList>
    </citation>
    <scope>NUCLEOTIDE SEQUENCE [GENOMIC DNA]</scope>
    <source>
        <strain>K12</strain>
    </source>
</reference>
<reference key="3">
    <citation type="journal article" date="1993" name="Genomics">
        <title>DNA sequence and analysis of 136 kilobases of the Escherichia coli genome: organizational symmetry around the origin of replication.</title>
        <authorList>
            <person name="Burland V.D."/>
            <person name="Plunkett G. III"/>
            <person name="Daniels D.L."/>
            <person name="Blattner F.R."/>
        </authorList>
    </citation>
    <scope>NUCLEOTIDE SEQUENCE [LARGE SCALE GENOMIC DNA]</scope>
    <source>
        <strain>K12 / MG1655 / ATCC 47076</strain>
    </source>
</reference>
<reference key="4">
    <citation type="journal article" date="1997" name="Science">
        <title>The complete genome sequence of Escherichia coli K-12.</title>
        <authorList>
            <person name="Blattner F.R."/>
            <person name="Plunkett G. III"/>
            <person name="Bloch C.A."/>
            <person name="Perna N.T."/>
            <person name="Burland V."/>
            <person name="Riley M."/>
            <person name="Collado-Vides J."/>
            <person name="Glasner J.D."/>
            <person name="Rode C.K."/>
            <person name="Mayhew G.F."/>
            <person name="Gregor J."/>
            <person name="Davis N.W."/>
            <person name="Kirkpatrick H.A."/>
            <person name="Goeden M.A."/>
            <person name="Rose D.J."/>
            <person name="Mau B."/>
            <person name="Shao Y."/>
        </authorList>
    </citation>
    <scope>NUCLEOTIDE SEQUENCE [LARGE SCALE GENOMIC DNA]</scope>
    <source>
        <strain>K12 / MG1655 / ATCC 47076</strain>
    </source>
</reference>
<reference key="5">
    <citation type="journal article" date="2006" name="Mol. Syst. Biol.">
        <title>Highly accurate genome sequences of Escherichia coli K-12 strains MG1655 and W3110.</title>
        <authorList>
            <person name="Hayashi K."/>
            <person name="Morooka N."/>
            <person name="Yamamoto Y."/>
            <person name="Fujita K."/>
            <person name="Isono K."/>
            <person name="Choi S."/>
            <person name="Ohtsubo E."/>
            <person name="Baba T."/>
            <person name="Wanner B.L."/>
            <person name="Mori H."/>
            <person name="Horiuchi T."/>
        </authorList>
    </citation>
    <scope>NUCLEOTIDE SEQUENCE [LARGE SCALE GENOMIC DNA]</scope>
    <source>
        <strain>K12 / W3110 / ATCC 27325 / DSM 5911</strain>
    </source>
</reference>
<reference key="6">
    <citation type="journal article" date="2005" name="Science">
        <title>Global topology analysis of the Escherichia coli inner membrane proteome.</title>
        <authorList>
            <person name="Daley D.O."/>
            <person name="Rapp M."/>
            <person name="Granseth E."/>
            <person name="Melen K."/>
            <person name="Drew D."/>
            <person name="von Heijne G."/>
        </authorList>
    </citation>
    <scope>TOPOLOGY [LARGE SCALE ANALYSIS]</scope>
    <source>
        <strain>K12 / MG1655 / ATCC 47076</strain>
    </source>
</reference>
<name>PTV3B_ECOLI</name>
<dbReference type="EC" id="2.7.1.-"/>
<dbReference type="EMBL" id="M15746">
    <property type="protein sequence ID" value="AAA83837.1"/>
    <property type="molecule type" value="Genomic_DNA"/>
</dbReference>
<dbReference type="EMBL" id="M16487">
    <property type="protein sequence ID" value="AAA23510.1"/>
    <property type="molecule type" value="Genomic_DNA"/>
</dbReference>
<dbReference type="EMBL" id="L10328">
    <property type="protein sequence ID" value="AAA62073.1"/>
    <property type="molecule type" value="Genomic_DNA"/>
</dbReference>
<dbReference type="EMBL" id="U00096">
    <property type="protein sequence ID" value="AAC76745.1"/>
    <property type="molecule type" value="Genomic_DNA"/>
</dbReference>
<dbReference type="EMBL" id="AP009048">
    <property type="protein sequence ID" value="BAE77566.1"/>
    <property type="molecule type" value="Genomic_DNA"/>
</dbReference>
<dbReference type="PIR" id="C25977">
    <property type="entry name" value="C25977"/>
</dbReference>
<dbReference type="RefSeq" id="NP_418178.1">
    <property type="nucleotide sequence ID" value="NC_000913.3"/>
</dbReference>
<dbReference type="RefSeq" id="WP_000137296.1">
    <property type="nucleotide sequence ID" value="NZ_STEB01000015.1"/>
</dbReference>
<dbReference type="SMR" id="P08722"/>
<dbReference type="BioGRID" id="4262137">
    <property type="interactions" value="5"/>
</dbReference>
<dbReference type="BioGRID" id="852538">
    <property type="interactions" value="1"/>
</dbReference>
<dbReference type="DIP" id="DIP-9215N"/>
<dbReference type="FunCoup" id="P08722">
    <property type="interactions" value="92"/>
</dbReference>
<dbReference type="IntAct" id="P08722">
    <property type="interactions" value="1"/>
</dbReference>
<dbReference type="STRING" id="511145.b3722"/>
<dbReference type="TCDB" id="4.A.1.2.2">
    <property type="family name" value="the pts glucose-glucoside (glc) family"/>
</dbReference>
<dbReference type="PaxDb" id="511145-b3722"/>
<dbReference type="EnsemblBacteria" id="AAC76745">
    <property type="protein sequence ID" value="AAC76745"/>
    <property type="gene ID" value="b3722"/>
</dbReference>
<dbReference type="GeneID" id="948236"/>
<dbReference type="KEGG" id="ecj:JW3700"/>
<dbReference type="KEGG" id="eco:b3722"/>
<dbReference type="KEGG" id="ecoc:C3026_20175"/>
<dbReference type="PATRIC" id="fig|1411691.4.peg.2979"/>
<dbReference type="EchoBASE" id="EB0113"/>
<dbReference type="eggNOG" id="COG1263">
    <property type="taxonomic scope" value="Bacteria"/>
</dbReference>
<dbReference type="eggNOG" id="COG1264">
    <property type="taxonomic scope" value="Bacteria"/>
</dbReference>
<dbReference type="eggNOG" id="COG2190">
    <property type="taxonomic scope" value="Bacteria"/>
</dbReference>
<dbReference type="HOGENOM" id="CLU_012312_2_1_6"/>
<dbReference type="InParanoid" id="P08722"/>
<dbReference type="OMA" id="LWQVCVI"/>
<dbReference type="OrthoDB" id="92465at2"/>
<dbReference type="PhylomeDB" id="P08722"/>
<dbReference type="BioCyc" id="EcoCyc:BGLF-MONOMER"/>
<dbReference type="BioCyc" id="MetaCyc:BGLF-MONOMER"/>
<dbReference type="PRO" id="PR:P08722"/>
<dbReference type="Proteomes" id="UP000000625">
    <property type="component" value="Chromosome"/>
</dbReference>
<dbReference type="GO" id="GO:0005886">
    <property type="term" value="C:plasma membrane"/>
    <property type="evidence" value="ECO:0000314"/>
    <property type="project" value="EcoCyc"/>
</dbReference>
<dbReference type="GO" id="GO:0016301">
    <property type="term" value="F:kinase activity"/>
    <property type="evidence" value="ECO:0007669"/>
    <property type="project" value="UniProtKB-KW"/>
</dbReference>
<dbReference type="GO" id="GO:0008982">
    <property type="term" value="F:protein-N(PI)-phosphohistidine-sugar phosphotransferase activity"/>
    <property type="evidence" value="ECO:0007669"/>
    <property type="project" value="InterPro"/>
</dbReference>
<dbReference type="GO" id="GO:0090589">
    <property type="term" value="F:protein-phosphocysteine-trehalose phosphotransferase system transporter activity"/>
    <property type="evidence" value="ECO:0000318"/>
    <property type="project" value="GO_Central"/>
</dbReference>
<dbReference type="GO" id="GO:0009401">
    <property type="term" value="P:phosphoenolpyruvate-dependent sugar phosphotransferase system"/>
    <property type="evidence" value="ECO:0000318"/>
    <property type="project" value="GO_Central"/>
</dbReference>
<dbReference type="GO" id="GO:0015771">
    <property type="term" value="P:trehalose transport"/>
    <property type="evidence" value="ECO:0000318"/>
    <property type="project" value="GO_Central"/>
</dbReference>
<dbReference type="CDD" id="cd00210">
    <property type="entry name" value="PTS_IIA_glc"/>
    <property type="match status" value="1"/>
</dbReference>
<dbReference type="CDD" id="cd00212">
    <property type="entry name" value="PTS_IIB_glc"/>
    <property type="match status" value="1"/>
</dbReference>
<dbReference type="FunFam" id="2.70.70.10:FF:000001">
    <property type="entry name" value="PTS system glucose-specific IIA component"/>
    <property type="match status" value="1"/>
</dbReference>
<dbReference type="FunFam" id="3.30.1360.60:FF:000001">
    <property type="entry name" value="PTS system glucose-specific IIBC component PtsG"/>
    <property type="match status" value="1"/>
</dbReference>
<dbReference type="Gene3D" id="2.70.70.10">
    <property type="entry name" value="Glucose Permease (Domain IIA)"/>
    <property type="match status" value="1"/>
</dbReference>
<dbReference type="Gene3D" id="3.30.1360.60">
    <property type="entry name" value="Glucose permease domain IIB"/>
    <property type="match status" value="1"/>
</dbReference>
<dbReference type="InterPro" id="IPR011055">
    <property type="entry name" value="Dup_hybrid_motif"/>
</dbReference>
<dbReference type="InterPro" id="IPR036878">
    <property type="entry name" value="Glu_permease_IIB"/>
</dbReference>
<dbReference type="InterPro" id="IPR018113">
    <property type="entry name" value="PTrfase_EIIB_Cys"/>
</dbReference>
<dbReference type="InterPro" id="IPR001127">
    <property type="entry name" value="PTS_EIIA_1_perm"/>
</dbReference>
<dbReference type="InterPro" id="IPR003352">
    <property type="entry name" value="PTS_EIIC"/>
</dbReference>
<dbReference type="InterPro" id="IPR013013">
    <property type="entry name" value="PTS_EIIC_1"/>
</dbReference>
<dbReference type="InterPro" id="IPR011297">
    <property type="entry name" value="PTS_IIABC_b_glu"/>
</dbReference>
<dbReference type="InterPro" id="IPR001996">
    <property type="entry name" value="PTS_IIB_1"/>
</dbReference>
<dbReference type="InterPro" id="IPR004719">
    <property type="entry name" value="PTS_maltose/Glc_sub_IIC"/>
</dbReference>
<dbReference type="InterPro" id="IPR050558">
    <property type="entry name" value="PTS_Sugar-Specific_Components"/>
</dbReference>
<dbReference type="NCBIfam" id="TIGR00826">
    <property type="entry name" value="EIIB_glc"/>
    <property type="match status" value="1"/>
</dbReference>
<dbReference type="NCBIfam" id="NF007335">
    <property type="entry name" value="PRK09824.1"/>
    <property type="match status" value="1"/>
</dbReference>
<dbReference type="NCBIfam" id="TIGR00830">
    <property type="entry name" value="PTBA"/>
    <property type="match status" value="1"/>
</dbReference>
<dbReference type="NCBIfam" id="TIGR00852">
    <property type="entry name" value="pts-Glc"/>
    <property type="match status" value="1"/>
</dbReference>
<dbReference type="NCBIfam" id="TIGR01995">
    <property type="entry name" value="PTS-II-ABC-beta"/>
    <property type="match status" value="1"/>
</dbReference>
<dbReference type="PANTHER" id="PTHR30175">
    <property type="entry name" value="PHOSPHOTRANSFERASE SYSTEM TRANSPORT PROTEIN"/>
    <property type="match status" value="1"/>
</dbReference>
<dbReference type="PANTHER" id="PTHR30175:SF1">
    <property type="entry name" value="PTS SYSTEM ARBUTIN-, CELLOBIOSE-, AND SALICIN-SPECIFIC EIIBC COMPONENT-RELATED"/>
    <property type="match status" value="1"/>
</dbReference>
<dbReference type="Pfam" id="PF00358">
    <property type="entry name" value="PTS_EIIA_1"/>
    <property type="match status" value="1"/>
</dbReference>
<dbReference type="Pfam" id="PF00367">
    <property type="entry name" value="PTS_EIIB"/>
    <property type="match status" value="1"/>
</dbReference>
<dbReference type="Pfam" id="PF02378">
    <property type="entry name" value="PTS_EIIC"/>
    <property type="match status" value="1"/>
</dbReference>
<dbReference type="SUPFAM" id="SSF51261">
    <property type="entry name" value="Duplicated hybrid motif"/>
    <property type="match status" value="1"/>
</dbReference>
<dbReference type="SUPFAM" id="SSF55604">
    <property type="entry name" value="Glucose permease domain IIB"/>
    <property type="match status" value="1"/>
</dbReference>
<dbReference type="PROSITE" id="PS51093">
    <property type="entry name" value="PTS_EIIA_TYPE_1"/>
    <property type="match status" value="1"/>
</dbReference>
<dbReference type="PROSITE" id="PS00371">
    <property type="entry name" value="PTS_EIIA_TYPE_1_HIS"/>
    <property type="match status" value="1"/>
</dbReference>
<dbReference type="PROSITE" id="PS51098">
    <property type="entry name" value="PTS_EIIB_TYPE_1"/>
    <property type="match status" value="1"/>
</dbReference>
<dbReference type="PROSITE" id="PS01035">
    <property type="entry name" value="PTS_EIIB_TYPE_1_CYS"/>
    <property type="match status" value="1"/>
</dbReference>
<dbReference type="PROSITE" id="PS51103">
    <property type="entry name" value="PTS_EIIC_TYPE_1"/>
    <property type="match status" value="1"/>
</dbReference>
<evidence type="ECO:0000255" key="1"/>
<evidence type="ECO:0000255" key="2">
    <source>
        <dbReference type="PROSITE-ProRule" id="PRU00416"/>
    </source>
</evidence>
<evidence type="ECO:0000255" key="3">
    <source>
        <dbReference type="PROSITE-ProRule" id="PRU00421"/>
    </source>
</evidence>
<evidence type="ECO:0000255" key="4">
    <source>
        <dbReference type="PROSITE-ProRule" id="PRU00426"/>
    </source>
</evidence>
<protein>
    <recommendedName>
        <fullName>PTS system beta-glucoside-specific EIIBCA component</fullName>
    </recommendedName>
    <alternativeName>
        <fullName>EIIBCA-Bgl</fullName>
        <shortName>EII-Bgl</shortName>
    </alternativeName>
    <domain>
        <recommendedName>
            <fullName>Beta-glucoside-specific phosphotransferase enzyme IIB component</fullName>
            <ecNumber>2.7.1.-</ecNumber>
        </recommendedName>
        <alternativeName>
            <fullName>PTS system beta-glucoside-specific EIIB component</fullName>
        </alternativeName>
    </domain>
    <domain>
        <recommendedName>
            <fullName>Beta-glucoside permease IIC component</fullName>
        </recommendedName>
        <alternativeName>
            <fullName>PTS system beta-glucoside-specific EIIC component</fullName>
        </alternativeName>
    </domain>
    <domain>
        <recommendedName>
            <fullName>Beta-glucoside-specific phosphotransferase enzyme IIA component</fullName>
        </recommendedName>
        <alternativeName>
            <fullName>PTS system beta-glucoside-specific EIIA component</fullName>
        </alternativeName>
    </domain>
</protein>
<feature type="chain" id="PRO_0000186481" description="PTS system beta-glucoside-specific EIIBCA component">
    <location>
        <begin position="1"/>
        <end position="625"/>
    </location>
</feature>
<feature type="topological domain" description="Periplasmic" evidence="1">
    <location>
        <begin position="1"/>
        <end position="99"/>
    </location>
</feature>
<feature type="transmembrane region" description="Helical" evidence="4">
    <location>
        <begin position="100"/>
        <end position="120"/>
    </location>
</feature>
<feature type="topological domain" description="Cytoplasmic" evidence="1">
    <location>
        <begin position="121"/>
        <end position="140"/>
    </location>
</feature>
<feature type="transmembrane region" description="Helical" evidence="4">
    <location>
        <begin position="141"/>
        <end position="161"/>
    </location>
</feature>
<feature type="topological domain" description="Periplasmic" evidence="1">
    <location>
        <begin position="162"/>
        <end position="166"/>
    </location>
</feature>
<feature type="transmembrane region" description="Helical" evidence="4">
    <location>
        <begin position="167"/>
        <end position="187"/>
    </location>
</feature>
<feature type="topological domain" description="Cytoplasmic" evidence="1">
    <location>
        <begin position="188"/>
        <end position="202"/>
    </location>
</feature>
<feature type="transmembrane region" description="Helical" evidence="4">
    <location>
        <begin position="203"/>
        <end position="223"/>
    </location>
</feature>
<feature type="topological domain" description="Periplasmic" evidence="1">
    <location>
        <begin position="224"/>
        <end position="244"/>
    </location>
</feature>
<feature type="transmembrane region" description="Helical" evidence="4">
    <location>
        <begin position="245"/>
        <end position="265"/>
    </location>
</feature>
<feature type="topological domain" description="Cytoplasmic" evidence="1">
    <location>
        <begin position="266"/>
        <end position="284"/>
    </location>
</feature>
<feature type="transmembrane region" description="Helical" evidence="4">
    <location>
        <begin position="285"/>
        <end position="305"/>
    </location>
</feature>
<feature type="topological domain" description="Periplasmic" evidence="1">
    <location>
        <begin position="306"/>
        <end position="324"/>
    </location>
</feature>
<feature type="transmembrane region" description="Helical" evidence="4">
    <location>
        <begin position="325"/>
        <end position="345"/>
    </location>
</feature>
<feature type="topological domain" description="Cytoplasmic" evidence="1">
    <location>
        <begin position="346"/>
        <end position="353"/>
    </location>
</feature>
<feature type="transmembrane region" description="Helical" evidence="4">
    <location>
        <begin position="354"/>
        <end position="374"/>
    </location>
</feature>
<feature type="topological domain" description="Periplasmic" evidence="1">
    <location>
        <begin position="375"/>
        <end position="380"/>
    </location>
</feature>
<feature type="transmembrane region" description="Helical" evidence="4">
    <location>
        <begin position="381"/>
        <end position="401"/>
    </location>
</feature>
<feature type="topological domain" description="Cytoplasmic" evidence="1">
    <location>
        <begin position="402"/>
        <end position="403"/>
    </location>
</feature>
<feature type="transmembrane region" description="Helical" evidence="4">
    <location>
        <begin position="404"/>
        <end position="424"/>
    </location>
</feature>
<feature type="topological domain" description="Periplasmic" evidence="1">
    <location>
        <begin position="425"/>
        <end position="431"/>
    </location>
</feature>
<feature type="transmembrane region" description="Helical" evidence="4">
    <location>
        <begin position="432"/>
        <end position="452"/>
    </location>
</feature>
<feature type="topological domain" description="Cytoplasmic" evidence="1">
    <location>
        <begin position="453"/>
        <end position="625"/>
    </location>
</feature>
<feature type="domain" description="PTS EIIB type-1" evidence="3">
    <location>
        <begin position="1"/>
        <end position="84"/>
    </location>
</feature>
<feature type="domain" description="PTS EIIC type-1" evidence="4">
    <location>
        <begin position="102"/>
        <end position="465"/>
    </location>
</feature>
<feature type="domain" description="PTS EIIA type-1" evidence="2">
    <location>
        <begin position="495"/>
        <end position="599"/>
    </location>
</feature>
<feature type="active site" description="Phosphocysteine intermediate; for EIIB activity" evidence="3">
    <location>
        <position position="24"/>
    </location>
</feature>
<feature type="active site" description="Tele-phosphohistidine intermediate; for EIIA activity" evidence="2">
    <location>
        <position position="547"/>
    </location>
</feature>
<organism>
    <name type="scientific">Escherichia coli (strain K12)</name>
    <dbReference type="NCBI Taxonomy" id="83333"/>
    <lineage>
        <taxon>Bacteria</taxon>
        <taxon>Pseudomonadati</taxon>
        <taxon>Pseudomonadota</taxon>
        <taxon>Gammaproteobacteria</taxon>
        <taxon>Enterobacterales</taxon>
        <taxon>Enterobacteriaceae</taxon>
        <taxon>Escherichia</taxon>
    </lineage>
</organism>
<gene>
    <name type="primary">bglF</name>
    <name type="synonym">bglC</name>
    <name type="synonym">bglS</name>
    <name type="ordered locus">b3722</name>
    <name type="ordered locus">JW3700</name>
</gene>